<comment type="function">
    <text evidence="1">Bidirectionally degrades single-stranded DNA into large acid-insoluble oligonucleotides, which are then degraded further into small acid-soluble oligonucleotides.</text>
</comment>
<comment type="catalytic activity">
    <reaction evidence="1">
        <text>Exonucleolytic cleavage in either 5'- to 3'- or 3'- to 5'-direction to yield nucleoside 5'-phosphates.</text>
        <dbReference type="EC" id="3.1.11.6"/>
    </reaction>
</comment>
<comment type="subunit">
    <text evidence="1">Heterooligomer composed of large and small subunits.</text>
</comment>
<comment type="subcellular location">
    <subcellularLocation>
        <location evidence="1">Cytoplasm</location>
    </subcellularLocation>
</comment>
<comment type="similarity">
    <text evidence="1">Belongs to the XseB family.</text>
</comment>
<proteinExistence type="inferred from homology"/>
<dbReference type="EC" id="3.1.11.6" evidence="1"/>
<dbReference type="EMBL" id="CP000409">
    <property type="protein sequence ID" value="ABV73674.1"/>
    <property type="molecule type" value="Genomic_DNA"/>
</dbReference>
<dbReference type="RefSeq" id="WP_012148869.1">
    <property type="nucleotide sequence ID" value="NC_009879.1"/>
</dbReference>
<dbReference type="SMR" id="A8EZ91"/>
<dbReference type="STRING" id="293613.A1E_03715"/>
<dbReference type="KEGG" id="rcm:A1E_03715"/>
<dbReference type="eggNOG" id="COG1722">
    <property type="taxonomic scope" value="Bacteria"/>
</dbReference>
<dbReference type="HOGENOM" id="CLU_145918_0_3_5"/>
<dbReference type="Proteomes" id="UP000007056">
    <property type="component" value="Chromosome"/>
</dbReference>
<dbReference type="GO" id="GO:0005829">
    <property type="term" value="C:cytosol"/>
    <property type="evidence" value="ECO:0007669"/>
    <property type="project" value="TreeGrafter"/>
</dbReference>
<dbReference type="GO" id="GO:0009318">
    <property type="term" value="C:exodeoxyribonuclease VII complex"/>
    <property type="evidence" value="ECO:0007669"/>
    <property type="project" value="InterPro"/>
</dbReference>
<dbReference type="GO" id="GO:0008855">
    <property type="term" value="F:exodeoxyribonuclease VII activity"/>
    <property type="evidence" value="ECO:0007669"/>
    <property type="project" value="UniProtKB-UniRule"/>
</dbReference>
<dbReference type="GO" id="GO:0006308">
    <property type="term" value="P:DNA catabolic process"/>
    <property type="evidence" value="ECO:0007669"/>
    <property type="project" value="UniProtKB-UniRule"/>
</dbReference>
<dbReference type="Gene3D" id="1.10.287.1040">
    <property type="entry name" value="Exonuclease VII, small subunit"/>
    <property type="match status" value="1"/>
</dbReference>
<dbReference type="HAMAP" id="MF_00337">
    <property type="entry name" value="Exonuc_7_S"/>
    <property type="match status" value="1"/>
</dbReference>
<dbReference type="InterPro" id="IPR003761">
    <property type="entry name" value="Exonuc_VII_S"/>
</dbReference>
<dbReference type="InterPro" id="IPR037004">
    <property type="entry name" value="Exonuc_VII_ssu_sf"/>
</dbReference>
<dbReference type="NCBIfam" id="NF002139">
    <property type="entry name" value="PRK00977.1-3"/>
    <property type="match status" value="1"/>
</dbReference>
<dbReference type="NCBIfam" id="NF002140">
    <property type="entry name" value="PRK00977.1-4"/>
    <property type="match status" value="1"/>
</dbReference>
<dbReference type="NCBIfam" id="TIGR01280">
    <property type="entry name" value="xseB"/>
    <property type="match status" value="1"/>
</dbReference>
<dbReference type="PANTHER" id="PTHR34137">
    <property type="entry name" value="EXODEOXYRIBONUCLEASE 7 SMALL SUBUNIT"/>
    <property type="match status" value="1"/>
</dbReference>
<dbReference type="PANTHER" id="PTHR34137:SF1">
    <property type="entry name" value="EXODEOXYRIBONUCLEASE 7 SMALL SUBUNIT"/>
    <property type="match status" value="1"/>
</dbReference>
<dbReference type="Pfam" id="PF02609">
    <property type="entry name" value="Exonuc_VII_S"/>
    <property type="match status" value="1"/>
</dbReference>
<dbReference type="PIRSF" id="PIRSF006488">
    <property type="entry name" value="Exonuc_VII_S"/>
    <property type="match status" value="1"/>
</dbReference>
<dbReference type="SUPFAM" id="SSF116842">
    <property type="entry name" value="XseB-like"/>
    <property type="match status" value="1"/>
</dbReference>
<accession>A8EZ91</accession>
<protein>
    <recommendedName>
        <fullName evidence="1">Exodeoxyribonuclease 7 small subunit</fullName>
        <ecNumber evidence="1">3.1.11.6</ecNumber>
    </recommendedName>
    <alternativeName>
        <fullName evidence="1">Exodeoxyribonuclease VII small subunit</fullName>
        <shortName evidence="1">Exonuclease VII small subunit</shortName>
    </alternativeName>
</protein>
<reference key="1">
    <citation type="submission" date="2007-09" db="EMBL/GenBank/DDBJ databases">
        <title>Complete genome sequence of Rickettsia canadensis.</title>
        <authorList>
            <person name="Madan A."/>
            <person name="Fahey J."/>
            <person name="Helton E."/>
            <person name="Ketteman M."/>
            <person name="Madan A."/>
            <person name="Rodrigues S."/>
            <person name="Sanchez A."/>
            <person name="Whiting M."/>
            <person name="Dasch G."/>
            <person name="Eremeeva M."/>
        </authorList>
    </citation>
    <scope>NUCLEOTIDE SEQUENCE [LARGE SCALE GENOMIC DNA]</scope>
    <source>
        <strain>McKiel</strain>
    </source>
</reference>
<name>EX7S_RICCK</name>
<feature type="chain" id="PRO_1000019591" description="Exodeoxyribonuclease 7 small subunit">
    <location>
        <begin position="1"/>
        <end position="80"/>
    </location>
</feature>
<gene>
    <name evidence="1" type="primary">xseB</name>
    <name type="ordered locus">A1E_03715</name>
</gene>
<evidence type="ECO:0000255" key="1">
    <source>
        <dbReference type="HAMAP-Rule" id="MF_00337"/>
    </source>
</evidence>
<organism>
    <name type="scientific">Rickettsia canadensis (strain McKiel)</name>
    <dbReference type="NCBI Taxonomy" id="293613"/>
    <lineage>
        <taxon>Bacteria</taxon>
        <taxon>Pseudomonadati</taxon>
        <taxon>Pseudomonadota</taxon>
        <taxon>Alphaproteobacteria</taxon>
        <taxon>Rickettsiales</taxon>
        <taxon>Rickettsiaceae</taxon>
        <taxon>Rickettsieae</taxon>
        <taxon>Rickettsia</taxon>
        <taxon>belli group</taxon>
    </lineage>
</organism>
<sequence length="80" mass="9160">MTNTKILEDNISFEEALKELEEIVKKIDNGQESLETAVNSFERGIVLKNHCEKKLKEARLKIEKITKLADSTVVLEETEI</sequence>
<keyword id="KW-0963">Cytoplasm</keyword>
<keyword id="KW-0269">Exonuclease</keyword>
<keyword id="KW-0378">Hydrolase</keyword>
<keyword id="KW-0540">Nuclease</keyword>